<evidence type="ECO:0000255" key="1">
    <source>
        <dbReference type="HAMAP-Rule" id="MF_00023"/>
    </source>
</evidence>
<gene>
    <name evidence="1" type="primary">smpB</name>
    <name type="ordered locus">USA300HOU_0811</name>
</gene>
<feature type="chain" id="PRO_1000074375" description="SsrA-binding protein">
    <location>
        <begin position="1"/>
        <end position="154"/>
    </location>
</feature>
<reference key="1">
    <citation type="journal article" date="2007" name="BMC Microbiol.">
        <title>Subtle genetic changes enhance virulence of methicillin resistant and sensitive Staphylococcus aureus.</title>
        <authorList>
            <person name="Highlander S.K."/>
            <person name="Hulten K.G."/>
            <person name="Qin X."/>
            <person name="Jiang H."/>
            <person name="Yerrapragada S."/>
            <person name="Mason E.O. Jr."/>
            <person name="Shang Y."/>
            <person name="Williams T.M."/>
            <person name="Fortunov R.M."/>
            <person name="Liu Y."/>
            <person name="Igboeli O."/>
            <person name="Petrosino J."/>
            <person name="Tirumalai M."/>
            <person name="Uzman A."/>
            <person name="Fox G.E."/>
            <person name="Cardenas A.M."/>
            <person name="Muzny D.M."/>
            <person name="Hemphill L."/>
            <person name="Ding Y."/>
            <person name="Dugan S."/>
            <person name="Blyth P.R."/>
            <person name="Buhay C.J."/>
            <person name="Dinh H.H."/>
            <person name="Hawes A.C."/>
            <person name="Holder M."/>
            <person name="Kovar C.L."/>
            <person name="Lee S.L."/>
            <person name="Liu W."/>
            <person name="Nazareth L.V."/>
            <person name="Wang Q."/>
            <person name="Zhou J."/>
            <person name="Kaplan S.L."/>
            <person name="Weinstock G.M."/>
        </authorList>
    </citation>
    <scope>NUCLEOTIDE SEQUENCE [LARGE SCALE GENOMIC DNA]</scope>
    <source>
        <strain>USA300 / TCH1516</strain>
    </source>
</reference>
<name>SSRP_STAAT</name>
<organism>
    <name type="scientific">Staphylococcus aureus (strain USA300 / TCH1516)</name>
    <dbReference type="NCBI Taxonomy" id="451516"/>
    <lineage>
        <taxon>Bacteria</taxon>
        <taxon>Bacillati</taxon>
        <taxon>Bacillota</taxon>
        <taxon>Bacilli</taxon>
        <taxon>Bacillales</taxon>
        <taxon>Staphylococcaceae</taxon>
        <taxon>Staphylococcus</taxon>
    </lineage>
</organism>
<accession>A8Z1A9</accession>
<sequence length="154" mass="17756">MAKKKSPGTLAENRKARHDYNIEDTIEAGIVLQGTEIKSIRRGSANLKDSYAQVKNGEMYLNNMHIAPYEEGNRFNHDPLRSRKLLLHKREIIKLGDQTREIGYSIVPLKLYLKHGHCKVLLGVARGKKKYDKRQALKEKAVKRDVARDMKARY</sequence>
<comment type="function">
    <text evidence="1">Required for rescue of stalled ribosomes mediated by trans-translation. Binds to transfer-messenger RNA (tmRNA), required for stable association of tmRNA with ribosomes. tmRNA and SmpB together mimic tRNA shape, replacing the anticodon stem-loop with SmpB. tmRNA is encoded by the ssrA gene; the 2 termini fold to resemble tRNA(Ala) and it encodes a 'tag peptide', a short internal open reading frame. During trans-translation Ala-aminoacylated tmRNA acts like a tRNA, entering the A-site of stalled ribosomes, displacing the stalled mRNA. The ribosome then switches to translate the ORF on the tmRNA; the nascent peptide is terminated with the 'tag peptide' encoded by the tmRNA and targeted for degradation. The ribosome is freed to recommence translation, which seems to be the essential function of trans-translation.</text>
</comment>
<comment type="subcellular location">
    <subcellularLocation>
        <location evidence="1">Cytoplasm</location>
    </subcellularLocation>
    <text evidence="1">The tmRNA-SmpB complex associates with stalled 70S ribosomes.</text>
</comment>
<comment type="similarity">
    <text evidence="1">Belongs to the SmpB family.</text>
</comment>
<keyword id="KW-0963">Cytoplasm</keyword>
<keyword id="KW-0694">RNA-binding</keyword>
<proteinExistence type="inferred from homology"/>
<protein>
    <recommendedName>
        <fullName evidence="1">SsrA-binding protein</fullName>
    </recommendedName>
    <alternativeName>
        <fullName evidence="1">Small protein B</fullName>
    </alternativeName>
</protein>
<dbReference type="EMBL" id="CP000730">
    <property type="protein sequence ID" value="ABX28832.1"/>
    <property type="molecule type" value="Genomic_DNA"/>
</dbReference>
<dbReference type="RefSeq" id="WP_001085185.1">
    <property type="nucleotide sequence ID" value="NC_010079.1"/>
</dbReference>
<dbReference type="SMR" id="A8Z1A9"/>
<dbReference type="KEGG" id="sax:USA300HOU_0811"/>
<dbReference type="HOGENOM" id="CLU_108953_0_0_9"/>
<dbReference type="GO" id="GO:0005829">
    <property type="term" value="C:cytosol"/>
    <property type="evidence" value="ECO:0007669"/>
    <property type="project" value="TreeGrafter"/>
</dbReference>
<dbReference type="GO" id="GO:0003723">
    <property type="term" value="F:RNA binding"/>
    <property type="evidence" value="ECO:0007669"/>
    <property type="project" value="UniProtKB-UniRule"/>
</dbReference>
<dbReference type="GO" id="GO:0070929">
    <property type="term" value="P:trans-translation"/>
    <property type="evidence" value="ECO:0007669"/>
    <property type="project" value="UniProtKB-UniRule"/>
</dbReference>
<dbReference type="CDD" id="cd09294">
    <property type="entry name" value="SmpB"/>
    <property type="match status" value="1"/>
</dbReference>
<dbReference type="Gene3D" id="2.40.280.10">
    <property type="match status" value="1"/>
</dbReference>
<dbReference type="HAMAP" id="MF_00023">
    <property type="entry name" value="SmpB"/>
    <property type="match status" value="1"/>
</dbReference>
<dbReference type="InterPro" id="IPR023620">
    <property type="entry name" value="SmpB"/>
</dbReference>
<dbReference type="InterPro" id="IPR000037">
    <property type="entry name" value="SsrA-bd_prot"/>
</dbReference>
<dbReference type="InterPro" id="IPR020081">
    <property type="entry name" value="SsrA-bd_prot_CS"/>
</dbReference>
<dbReference type="NCBIfam" id="NF003843">
    <property type="entry name" value="PRK05422.1"/>
    <property type="match status" value="1"/>
</dbReference>
<dbReference type="NCBIfam" id="TIGR00086">
    <property type="entry name" value="smpB"/>
    <property type="match status" value="1"/>
</dbReference>
<dbReference type="PANTHER" id="PTHR30308:SF2">
    <property type="entry name" value="SSRA-BINDING PROTEIN"/>
    <property type="match status" value="1"/>
</dbReference>
<dbReference type="PANTHER" id="PTHR30308">
    <property type="entry name" value="TMRNA-BINDING COMPONENT OF TRANS-TRANSLATION TAGGING COMPLEX"/>
    <property type="match status" value="1"/>
</dbReference>
<dbReference type="Pfam" id="PF01668">
    <property type="entry name" value="SmpB"/>
    <property type="match status" value="1"/>
</dbReference>
<dbReference type="SUPFAM" id="SSF74982">
    <property type="entry name" value="Small protein B (SmpB)"/>
    <property type="match status" value="1"/>
</dbReference>
<dbReference type="PROSITE" id="PS01317">
    <property type="entry name" value="SSRP"/>
    <property type="match status" value="1"/>
</dbReference>